<organism>
    <name type="scientific">Burkholderia mallei (strain ATCC 23344)</name>
    <dbReference type="NCBI Taxonomy" id="243160"/>
    <lineage>
        <taxon>Bacteria</taxon>
        <taxon>Pseudomonadati</taxon>
        <taxon>Pseudomonadota</taxon>
        <taxon>Betaproteobacteria</taxon>
        <taxon>Burkholderiales</taxon>
        <taxon>Burkholderiaceae</taxon>
        <taxon>Burkholderia</taxon>
        <taxon>pseudomallei group</taxon>
    </lineage>
</organism>
<reference key="1">
    <citation type="journal article" date="2004" name="Proc. Natl. Acad. Sci. U.S.A.">
        <title>Structural flexibility in the Burkholderia mallei genome.</title>
        <authorList>
            <person name="Nierman W.C."/>
            <person name="DeShazer D."/>
            <person name="Kim H.S."/>
            <person name="Tettelin H."/>
            <person name="Nelson K.E."/>
            <person name="Feldblyum T.V."/>
            <person name="Ulrich R.L."/>
            <person name="Ronning C.M."/>
            <person name="Brinkac L.M."/>
            <person name="Daugherty S.C."/>
            <person name="Davidsen T.D."/>
            <person name="DeBoy R.T."/>
            <person name="Dimitrov G."/>
            <person name="Dodson R.J."/>
            <person name="Durkin A.S."/>
            <person name="Gwinn M.L."/>
            <person name="Haft D.H."/>
            <person name="Khouri H.M."/>
            <person name="Kolonay J.F."/>
            <person name="Madupu R."/>
            <person name="Mohammoud Y."/>
            <person name="Nelson W.C."/>
            <person name="Radune D."/>
            <person name="Romero C.M."/>
            <person name="Sarria S."/>
            <person name="Selengut J."/>
            <person name="Shamblin C."/>
            <person name="Sullivan S.A."/>
            <person name="White O."/>
            <person name="Yu Y."/>
            <person name="Zafar N."/>
            <person name="Zhou L."/>
            <person name="Fraser C.M."/>
        </authorList>
    </citation>
    <scope>NUCLEOTIDE SEQUENCE [LARGE SCALE GENOMIC DNA]</scope>
    <source>
        <strain>ATCC 23344</strain>
    </source>
</reference>
<sequence length="503" mass="52681">MDFSIKGCDWSKGTANGFLTGKSDCIVLGVFEAQTLSGAALDIDEATKGLVSRVIKAGDIDGKLGKTLFLHEVSGIGASRVLLVGLGRQDAFSQKAYGDAAKVAWRALLGTKVVQVTFTLAQLPVPERASDWGVRAAILALRNETYKFTQMKSKPDAGAPALKRVVFSVDPADDKAAKVAAKQAVALANGMDLTRDLGNLPGNVCTPTYLANTAKKIAKDWGLKVDVLGLKQIQALKMGSFLSVAKGSVEPPQFIVLQYRGAAAKAAPVVLVGKGITFDSGGISLKPGEGMDEMKYDMCGAGSVLGTMRAVAEMGLKVNVVAIVPTCENMPAGNANKPGDIVTSMKGLTIEVLNTDAEGRLILCDALTYAERFKPAAVIDVATLTGACIIALGHHNTGLFSKDDALAGELLDASREAGDPAWRLPLDDEYQDQLKSNFADLANIGGRPAGSVTAACFLSRFAENYPWAHLDIAGTAWKSGAAKGATGRPVPLLAQFLIDRAGA</sequence>
<proteinExistence type="inferred from homology"/>
<accession>Q62LH2</accession>
<gene>
    <name evidence="1" type="primary">pepA</name>
    <name type="ordered locus">BMA0672</name>
</gene>
<protein>
    <recommendedName>
        <fullName evidence="1">Probable cytosol aminopeptidase</fullName>
        <ecNumber evidence="1">3.4.11.1</ecNumber>
    </recommendedName>
    <alternativeName>
        <fullName evidence="1">Leucine aminopeptidase</fullName>
        <shortName evidence="1">LAP</shortName>
        <ecNumber evidence="1">3.4.11.10</ecNumber>
    </alternativeName>
    <alternativeName>
        <fullName evidence="1">Leucyl aminopeptidase</fullName>
    </alternativeName>
</protein>
<comment type="function">
    <text evidence="1">Presumably involved in the processing and regular turnover of intracellular proteins. Catalyzes the removal of unsubstituted N-terminal amino acids from various peptides.</text>
</comment>
<comment type="catalytic activity">
    <reaction evidence="1">
        <text>Release of an N-terminal amino acid, Xaa-|-Yaa-, in which Xaa is preferably Leu, but may be other amino acids including Pro although not Arg or Lys, and Yaa may be Pro. Amino acid amides and methyl esters are also readily hydrolyzed, but rates on arylamides are exceedingly low.</text>
        <dbReference type="EC" id="3.4.11.1"/>
    </reaction>
</comment>
<comment type="catalytic activity">
    <reaction evidence="1">
        <text>Release of an N-terminal amino acid, preferentially leucine, but not glutamic or aspartic acids.</text>
        <dbReference type="EC" id="3.4.11.10"/>
    </reaction>
</comment>
<comment type="cofactor">
    <cofactor evidence="1">
        <name>Mn(2+)</name>
        <dbReference type="ChEBI" id="CHEBI:29035"/>
    </cofactor>
    <text evidence="1">Binds 2 manganese ions per subunit.</text>
</comment>
<comment type="subcellular location">
    <subcellularLocation>
        <location evidence="1">Cytoplasm</location>
    </subcellularLocation>
</comment>
<comment type="similarity">
    <text evidence="1">Belongs to the peptidase M17 family.</text>
</comment>
<name>AMPA_BURMA</name>
<evidence type="ECO:0000255" key="1">
    <source>
        <dbReference type="HAMAP-Rule" id="MF_00181"/>
    </source>
</evidence>
<feature type="chain" id="PRO_1000019894" description="Probable cytosol aminopeptidase">
    <location>
        <begin position="1"/>
        <end position="503"/>
    </location>
</feature>
<feature type="active site" evidence="1">
    <location>
        <position position="286"/>
    </location>
</feature>
<feature type="active site" evidence="1">
    <location>
        <position position="360"/>
    </location>
</feature>
<feature type="binding site" evidence="1">
    <location>
        <position position="274"/>
    </location>
    <ligand>
        <name>Mn(2+)</name>
        <dbReference type="ChEBI" id="CHEBI:29035"/>
        <label>2</label>
    </ligand>
</feature>
<feature type="binding site" evidence="1">
    <location>
        <position position="279"/>
    </location>
    <ligand>
        <name>Mn(2+)</name>
        <dbReference type="ChEBI" id="CHEBI:29035"/>
        <label>1</label>
    </ligand>
</feature>
<feature type="binding site" evidence="1">
    <location>
        <position position="279"/>
    </location>
    <ligand>
        <name>Mn(2+)</name>
        <dbReference type="ChEBI" id="CHEBI:29035"/>
        <label>2</label>
    </ligand>
</feature>
<feature type="binding site" evidence="1">
    <location>
        <position position="297"/>
    </location>
    <ligand>
        <name>Mn(2+)</name>
        <dbReference type="ChEBI" id="CHEBI:29035"/>
        <label>2</label>
    </ligand>
</feature>
<feature type="binding site" evidence="1">
    <location>
        <position position="356"/>
    </location>
    <ligand>
        <name>Mn(2+)</name>
        <dbReference type="ChEBI" id="CHEBI:29035"/>
        <label>1</label>
    </ligand>
</feature>
<feature type="binding site" evidence="1">
    <location>
        <position position="358"/>
    </location>
    <ligand>
        <name>Mn(2+)</name>
        <dbReference type="ChEBI" id="CHEBI:29035"/>
        <label>1</label>
    </ligand>
</feature>
<feature type="binding site" evidence="1">
    <location>
        <position position="358"/>
    </location>
    <ligand>
        <name>Mn(2+)</name>
        <dbReference type="ChEBI" id="CHEBI:29035"/>
        <label>2</label>
    </ligand>
</feature>
<keyword id="KW-0031">Aminopeptidase</keyword>
<keyword id="KW-0963">Cytoplasm</keyword>
<keyword id="KW-0378">Hydrolase</keyword>
<keyword id="KW-0464">Manganese</keyword>
<keyword id="KW-0479">Metal-binding</keyword>
<keyword id="KW-0645">Protease</keyword>
<keyword id="KW-1185">Reference proteome</keyword>
<dbReference type="EC" id="3.4.11.1" evidence="1"/>
<dbReference type="EC" id="3.4.11.10" evidence="1"/>
<dbReference type="EMBL" id="CP000010">
    <property type="protein sequence ID" value="AAU49626.1"/>
    <property type="molecule type" value="Genomic_DNA"/>
</dbReference>
<dbReference type="RefSeq" id="WP_004191270.1">
    <property type="nucleotide sequence ID" value="NC_006348.1"/>
</dbReference>
<dbReference type="RefSeq" id="YP_102447.1">
    <property type="nucleotide sequence ID" value="NC_006348.1"/>
</dbReference>
<dbReference type="SMR" id="Q62LH2"/>
<dbReference type="MEROPS" id="M17.003"/>
<dbReference type="KEGG" id="bma:BMA0672"/>
<dbReference type="PATRIC" id="fig|243160.12.peg.694"/>
<dbReference type="eggNOG" id="COG0260">
    <property type="taxonomic scope" value="Bacteria"/>
</dbReference>
<dbReference type="HOGENOM" id="CLU_013734_2_2_4"/>
<dbReference type="Proteomes" id="UP000006693">
    <property type="component" value="Chromosome 1"/>
</dbReference>
<dbReference type="GO" id="GO:0005737">
    <property type="term" value="C:cytoplasm"/>
    <property type="evidence" value="ECO:0007669"/>
    <property type="project" value="UniProtKB-SubCell"/>
</dbReference>
<dbReference type="GO" id="GO:0030145">
    <property type="term" value="F:manganese ion binding"/>
    <property type="evidence" value="ECO:0007669"/>
    <property type="project" value="UniProtKB-UniRule"/>
</dbReference>
<dbReference type="GO" id="GO:0070006">
    <property type="term" value="F:metalloaminopeptidase activity"/>
    <property type="evidence" value="ECO:0007669"/>
    <property type="project" value="InterPro"/>
</dbReference>
<dbReference type="GO" id="GO:0006508">
    <property type="term" value="P:proteolysis"/>
    <property type="evidence" value="ECO:0007669"/>
    <property type="project" value="UniProtKB-KW"/>
</dbReference>
<dbReference type="CDD" id="cd00433">
    <property type="entry name" value="Peptidase_M17"/>
    <property type="match status" value="1"/>
</dbReference>
<dbReference type="FunFam" id="3.40.630.10:FF:000004">
    <property type="entry name" value="Probable cytosol aminopeptidase"/>
    <property type="match status" value="1"/>
</dbReference>
<dbReference type="Gene3D" id="3.40.220.10">
    <property type="entry name" value="Leucine Aminopeptidase, subunit E, domain 1"/>
    <property type="match status" value="1"/>
</dbReference>
<dbReference type="Gene3D" id="3.40.630.10">
    <property type="entry name" value="Zn peptidases"/>
    <property type="match status" value="1"/>
</dbReference>
<dbReference type="HAMAP" id="MF_00181">
    <property type="entry name" value="Cytosol_peptidase_M17"/>
    <property type="match status" value="1"/>
</dbReference>
<dbReference type="InterPro" id="IPR011356">
    <property type="entry name" value="Leucine_aapep/pepB"/>
</dbReference>
<dbReference type="InterPro" id="IPR043472">
    <property type="entry name" value="Macro_dom-like"/>
</dbReference>
<dbReference type="InterPro" id="IPR000819">
    <property type="entry name" value="Peptidase_M17_C"/>
</dbReference>
<dbReference type="InterPro" id="IPR023042">
    <property type="entry name" value="Peptidase_M17_leu_NH2_pept"/>
</dbReference>
<dbReference type="InterPro" id="IPR008283">
    <property type="entry name" value="Peptidase_M17_N"/>
</dbReference>
<dbReference type="NCBIfam" id="NF002073">
    <property type="entry name" value="PRK00913.1-2"/>
    <property type="match status" value="1"/>
</dbReference>
<dbReference type="NCBIfam" id="NF002074">
    <property type="entry name" value="PRK00913.1-4"/>
    <property type="match status" value="1"/>
</dbReference>
<dbReference type="NCBIfam" id="NF002077">
    <property type="entry name" value="PRK00913.2-4"/>
    <property type="match status" value="1"/>
</dbReference>
<dbReference type="NCBIfam" id="NF002083">
    <property type="entry name" value="PRK00913.3-5"/>
    <property type="match status" value="1"/>
</dbReference>
<dbReference type="PANTHER" id="PTHR11963:SF23">
    <property type="entry name" value="CYTOSOL AMINOPEPTIDASE"/>
    <property type="match status" value="1"/>
</dbReference>
<dbReference type="PANTHER" id="PTHR11963">
    <property type="entry name" value="LEUCINE AMINOPEPTIDASE-RELATED"/>
    <property type="match status" value="1"/>
</dbReference>
<dbReference type="Pfam" id="PF00883">
    <property type="entry name" value="Peptidase_M17"/>
    <property type="match status" value="1"/>
</dbReference>
<dbReference type="Pfam" id="PF02789">
    <property type="entry name" value="Peptidase_M17_N"/>
    <property type="match status" value="1"/>
</dbReference>
<dbReference type="PRINTS" id="PR00481">
    <property type="entry name" value="LAMNOPPTDASE"/>
</dbReference>
<dbReference type="SUPFAM" id="SSF52949">
    <property type="entry name" value="Macro domain-like"/>
    <property type="match status" value="1"/>
</dbReference>
<dbReference type="SUPFAM" id="SSF53187">
    <property type="entry name" value="Zn-dependent exopeptidases"/>
    <property type="match status" value="1"/>
</dbReference>
<dbReference type="PROSITE" id="PS00631">
    <property type="entry name" value="CYTOSOL_AP"/>
    <property type="match status" value="1"/>
</dbReference>